<proteinExistence type="evidence at transcript level"/>
<gene>
    <name type="primary">CDC20</name>
</gene>
<reference key="1">
    <citation type="submission" date="2004-10" db="EMBL/GenBank/DDBJ databases">
        <title>Porcine homolog of CDC20 (cell division cycle 20), p55CDC.</title>
        <authorList>
            <person name="Yamamuro T."/>
            <person name="Naito K."/>
            <person name="Tojo H."/>
        </authorList>
    </citation>
    <scope>NUCLEOTIDE SEQUENCE [MRNA]</scope>
</reference>
<feature type="chain" id="PRO_0000278194" description="Cell division cycle protein 20 homolog">
    <location>
        <begin position="1"/>
        <end position="499"/>
    </location>
</feature>
<feature type="repeat" description="WD 1">
    <location>
        <begin position="182"/>
        <end position="221"/>
    </location>
</feature>
<feature type="repeat" description="WD 2">
    <location>
        <begin position="224"/>
        <end position="263"/>
    </location>
</feature>
<feature type="repeat" description="WD 3">
    <location>
        <begin position="266"/>
        <end position="303"/>
    </location>
</feature>
<feature type="repeat" description="WD 4">
    <location>
        <begin position="307"/>
        <end position="346"/>
    </location>
</feature>
<feature type="repeat" description="WD 5">
    <location>
        <begin position="353"/>
        <end position="395"/>
    </location>
</feature>
<feature type="repeat" description="WD 6">
    <location>
        <begin position="397"/>
        <end position="438"/>
    </location>
</feature>
<feature type="repeat" description="WD 7">
    <location>
        <begin position="441"/>
        <end position="480"/>
    </location>
</feature>
<feature type="region of interest" description="Disordered" evidence="4">
    <location>
        <begin position="20"/>
        <end position="81"/>
    </location>
</feature>
<feature type="compositionally biased region" description="Polar residues" evidence="4">
    <location>
        <begin position="61"/>
        <end position="72"/>
    </location>
</feature>
<feature type="modified residue" description="Phosphoserine" evidence="2">
    <location>
        <position position="41"/>
    </location>
</feature>
<feature type="modified residue" description="N6-acetyllysine" evidence="2">
    <location>
        <position position="66"/>
    </location>
</feature>
<feature type="modified residue" description="Phosphothreonine" evidence="2">
    <location>
        <position position="70"/>
    </location>
</feature>
<feature type="modified residue" description="Phosphoserine" evidence="2">
    <location>
        <position position="72"/>
    </location>
</feature>
<feature type="modified residue" description="Phosphoserine" evidence="2">
    <location>
        <position position="92"/>
    </location>
</feature>
<feature type="modified residue" description="Phosphothreonine" evidence="2">
    <location>
        <position position="106"/>
    </location>
</feature>
<feature type="modified residue" description="Phosphoserine" evidence="2">
    <location>
        <position position="153"/>
    </location>
</feature>
<feature type="modified residue" description="Phosphothreonine" evidence="2">
    <location>
        <position position="157"/>
    </location>
</feature>
<feature type="modified residue" description="Phosphoserine" evidence="2">
    <location>
        <position position="161"/>
    </location>
</feature>
<feature type="cross-link" description="Glycyl lysine isopeptide (Lys-Gly) (interchain with G-Cter in ubiquitin)" evidence="2">
    <location>
        <position position="485"/>
    </location>
</feature>
<feature type="cross-link" description="Glycyl lysine isopeptide (Lys-Gly) (interchain with G-Cter in ubiquitin)" evidence="2">
    <location>
        <position position="490"/>
    </location>
</feature>
<accession>Q5H7C0</accession>
<keyword id="KW-0007">Acetylation</keyword>
<keyword id="KW-0131">Cell cycle</keyword>
<keyword id="KW-0132">Cell division</keyword>
<keyword id="KW-0137">Centromere</keyword>
<keyword id="KW-0158">Chromosome</keyword>
<keyword id="KW-0963">Cytoplasm</keyword>
<keyword id="KW-0206">Cytoskeleton</keyword>
<keyword id="KW-1017">Isopeptide bond</keyword>
<keyword id="KW-0995">Kinetochore</keyword>
<keyword id="KW-0498">Mitosis</keyword>
<keyword id="KW-0597">Phosphoprotein</keyword>
<keyword id="KW-1185">Reference proteome</keyword>
<keyword id="KW-0677">Repeat</keyword>
<keyword id="KW-0832">Ubl conjugation</keyword>
<keyword id="KW-0833">Ubl conjugation pathway</keyword>
<keyword id="KW-0853">WD repeat</keyword>
<comment type="function">
    <text evidence="2 3">Substrate-specific adapter of the anaphase promoting complex/cyclosome (APC/C) complex that confers substrate specificity by binding to substrates and targeting them to the APC/C complex for ubiquitination and degradation. Recognizes and binds the destruction box (D box) on protein substrates. Involved in the metaphase/anaphase transition of cell cycle. Is regulated by MAD2L1: in metaphase the MAD2L1-CDC20-APC/C ternary complex is inactive and in anaphase the CDC20-APC/C binary complex is active in degrading substrates (By similarity). The CDC20-APC/C complex positively regulates the formation of synaptic vesicle clustering at active zone to the presynaptic membrane in postmitotic neurons (By similarity). CDC20-APC/C-induced degradation of NEUROD2 induces presynaptic differentiation (By similarity). The CDC20-APC/C complex promotes proper dilation formation and radial migration by degrading CCDC41 (By similarity).</text>
</comment>
<comment type="pathway">
    <text>Protein modification; protein ubiquitination.</text>
</comment>
<comment type="subunit">
    <text evidence="2 3">Component of a complex with CDC20, CDC27, SPATC1 and TUBG1 (By similarity). Interacts with NEUROD2 (By similarity). Interacts with dimeric MAD2L1 in its closed conformation form (By similarity). Interacts with BUB1B (By similarity). The phosphorylated form interacts with APC/C (By similarity). Interacts with NINL (By similarity). May interact with MAD2L2 (By similarity). Interacts with CDK5RAP2 (By similarity). Interacts with SIRT2 (By similarity). Interacts with isoform 1 of NEK2 (By similarity). Interacts with HSF1 (via phosphorylated form); this interaction occurs in mitosis in a MAD2L1-dependent manner and prevents PLK1-stimulated degradation of HSF1 by blocking the recruitment of the SCF(BTRC) ubiquitin ligase complex (By similarity). Interacts (via the N-terminal substrate-binding domain) with FBXO5 (By similarity). Interacts with CCNF (By similarity). Interacts with USP22 (By similarity).</text>
</comment>
<comment type="subcellular location">
    <subcellularLocation>
        <location evidence="2">Cytoplasm</location>
        <location evidence="2">Cytoskeleton</location>
        <location evidence="2">Microtubule organizing center</location>
        <location evidence="2">Centrosome</location>
    </subcellularLocation>
    <subcellularLocation>
        <location evidence="2">Chromosome</location>
        <location evidence="2">Centromere</location>
        <location evidence="2">Kinetochore</location>
    </subcellularLocation>
    <subcellularLocation>
        <location evidence="2">Cytoplasm</location>
        <location evidence="2">Cytoskeleton</location>
        <location evidence="2">Spindle pole</location>
    </subcellularLocation>
</comment>
<comment type="PTM">
    <text evidence="2">Phosphorylated during mitosis (By similarity). Phosphorylated by BUB1 at Ser-41; Ser-72; Ser-92; Ser-153; Thr-157 and Ser-161 (By similarity). Phosphorylated by NEK2 (By similarity).</text>
</comment>
<comment type="PTM">
    <text evidence="1">Dephosphorylated by CTDP1.</text>
</comment>
<comment type="PTM">
    <text evidence="1">Acetylated. Deacetylated at Lys-66 by SIRT2; deacetylation enhances the interaction of CDC20 with CDC27, leading to activation of anaphase promoting complex/cyclosome (APC/C) (By similarity).</text>
</comment>
<comment type="PTM">
    <text evidence="2">Ubiquitinated and degraded by the proteasome during spindle assembly checkpoint (By similarity). Ubiquitinated at Lys-490 during prometaphase. Ubiquitination at Lys-485 and Lys-490 has no effect on its ability to bind the APC/C complex (By similarity). Ubiquitinated by UBR5 when not assembled in a multiprotein complex, leading to its degradation: UBR5 recognizes and binds a degron that is not accessible when CDC20 is part of a complex (By similarity).</text>
</comment>
<comment type="similarity">
    <text evidence="5">Belongs to the WD repeat CDC20/Fizzy family.</text>
</comment>
<name>CDC20_PIG</name>
<sequence>MAQFVFESDLHSLLQLDAPIPNAPPARWQRKAKEAAGPAPSPMRAANRSHSAGRTPGRTPGKSNSKMQTTPSKPGGDRYIPHRSASQMEVASFLLSKENQPDNSQTPTKKEHQKAWALNLNGFDVEEAKILRLSGKPQNAPEGYQNRLKVLYSQKATPGSSRKTCRYIPSLPDRILDAPEIRNDYYLNLVDWSSGNVLAVALDNSVYLWSASSGDILQLLQMEQPGDYVSSVAWIKEGNYLAVGTSSAEVQLWDVQQQKRLRNMTSHSARVGSLCWNSYILSSGSRSGHIHHHDVRVAEHHVATLSGHSQEVCGLRWAPDGRHLASGGNDNLVNVWPSAPGEGGWVPLQTFTQHQGAVKAVAWCPWQSNVLATGGGTSDRHIRIWNVCSGACLSAVDAHSQVCSILWSPHYKELISGHGFAQNQLVIWKYPTMAKVAELKGHTARVLSLTMSPDGATVASAAADETLRLWRCFELDPARRREREKASAAKSSLIHQGIR</sequence>
<protein>
    <recommendedName>
        <fullName>Cell division cycle protein 20 homolog</fullName>
    </recommendedName>
    <alternativeName>
        <fullName>p55CDC</fullName>
    </alternativeName>
</protein>
<evidence type="ECO:0000250" key="1"/>
<evidence type="ECO:0000250" key="2">
    <source>
        <dbReference type="UniProtKB" id="Q12834"/>
    </source>
</evidence>
<evidence type="ECO:0000250" key="3">
    <source>
        <dbReference type="UniProtKB" id="Q9JJ66"/>
    </source>
</evidence>
<evidence type="ECO:0000256" key="4">
    <source>
        <dbReference type="SAM" id="MobiDB-lite"/>
    </source>
</evidence>
<evidence type="ECO:0000305" key="5"/>
<dbReference type="EMBL" id="AB192873">
    <property type="protein sequence ID" value="BAD89276.1"/>
    <property type="molecule type" value="mRNA"/>
</dbReference>
<dbReference type="RefSeq" id="NP_001116566.1">
    <property type="nucleotide sequence ID" value="NM_001123094.1"/>
</dbReference>
<dbReference type="SMR" id="Q5H7C0"/>
<dbReference type="FunCoup" id="Q5H7C0">
    <property type="interactions" value="1031"/>
</dbReference>
<dbReference type="STRING" id="9823.ENSSSCP00000004268"/>
<dbReference type="PaxDb" id="9823-ENSSSCP00000004268"/>
<dbReference type="Ensembl" id="ENSSSCT00000004368.4">
    <property type="protein sequence ID" value="ENSSSCP00000004268.2"/>
    <property type="gene ID" value="ENSSSCG00000003949.5"/>
</dbReference>
<dbReference type="Ensembl" id="ENSSSCT00015099449.1">
    <property type="protein sequence ID" value="ENSSSCP00015041112.1"/>
    <property type="gene ID" value="ENSSSCG00015073942.1"/>
</dbReference>
<dbReference type="Ensembl" id="ENSSSCT00040091155.1">
    <property type="protein sequence ID" value="ENSSSCP00040040157.1"/>
    <property type="gene ID" value="ENSSSCG00040066718.1"/>
</dbReference>
<dbReference type="Ensembl" id="ENSSSCT00045065251.1">
    <property type="protein sequence ID" value="ENSSSCP00045046162.1"/>
    <property type="gene ID" value="ENSSSCG00045037768.1"/>
</dbReference>
<dbReference type="Ensembl" id="ENSSSCT00050054962.1">
    <property type="protein sequence ID" value="ENSSSCP00050023246.1"/>
    <property type="gene ID" value="ENSSSCG00050040608.1"/>
</dbReference>
<dbReference type="Ensembl" id="ENSSSCT00055006222.1">
    <property type="protein sequence ID" value="ENSSSCP00055004886.1"/>
    <property type="gene ID" value="ENSSSCG00055003208.1"/>
</dbReference>
<dbReference type="Ensembl" id="ENSSSCT00085026335">
    <property type="protein sequence ID" value="ENSSSCP00085018221"/>
    <property type="gene ID" value="ENSSSCG00085013895"/>
</dbReference>
<dbReference type="Ensembl" id="ENSSSCT00090036682">
    <property type="protein sequence ID" value="ENSSSCP00090022859"/>
    <property type="gene ID" value="ENSSSCG00090020678"/>
</dbReference>
<dbReference type="Ensembl" id="ENSSSCT00105051089">
    <property type="protein sequence ID" value="ENSSSCP00105035975"/>
    <property type="gene ID" value="ENSSSCG00105026896"/>
</dbReference>
<dbReference type="Ensembl" id="ENSSSCT00110068168">
    <property type="protein sequence ID" value="ENSSSCP00110048018"/>
    <property type="gene ID" value="ENSSSCG00110035846"/>
</dbReference>
<dbReference type="Ensembl" id="ENSSSCT00115025929">
    <property type="protein sequence ID" value="ENSSSCP00115024570"/>
    <property type="gene ID" value="ENSSSCG00115014934"/>
</dbReference>
<dbReference type="Ensembl" id="ENSSSCT00130015047">
    <property type="protein sequence ID" value="ENSSSCP00130010169"/>
    <property type="gene ID" value="ENSSSCG00130008149"/>
</dbReference>
<dbReference type="GeneID" id="397379"/>
<dbReference type="KEGG" id="ssc:397379"/>
<dbReference type="CTD" id="991"/>
<dbReference type="VGNC" id="VGNC:86444">
    <property type="gene designation" value="CDC20"/>
</dbReference>
<dbReference type="eggNOG" id="KOG0305">
    <property type="taxonomic scope" value="Eukaryota"/>
</dbReference>
<dbReference type="GeneTree" id="ENSGT00950000183104"/>
<dbReference type="HOGENOM" id="CLU_014831_6_1_1"/>
<dbReference type="InParanoid" id="Q5H7C0"/>
<dbReference type="OMA" id="CSGACLN"/>
<dbReference type="OrthoDB" id="10263272at2759"/>
<dbReference type="TreeFam" id="TF101065"/>
<dbReference type="Reactome" id="R-SSC-141405">
    <property type="pathway name" value="Inhibition of the proteolytic activity of APC/C required for the onset of anaphase by mitotic spindle checkpoint components"/>
</dbReference>
<dbReference type="Reactome" id="R-SSC-141430">
    <property type="pathway name" value="Inactivation of APC/C via direct inhibition of the APC/C complex"/>
</dbReference>
<dbReference type="Reactome" id="R-SSC-141444">
    <property type="pathway name" value="Amplification of signal from unattached kinetochores via a MAD2 inhibitory signal"/>
</dbReference>
<dbReference type="Reactome" id="R-SSC-174048">
    <property type="pathway name" value="APC/C:Cdc20 mediated degradation of Cyclin B"/>
</dbReference>
<dbReference type="Reactome" id="R-SSC-174113">
    <property type="pathway name" value="SCF-beta-TrCP mediated degradation of Emi1"/>
</dbReference>
<dbReference type="Reactome" id="R-SSC-174154">
    <property type="pathway name" value="APC/C:Cdc20 mediated degradation of Securin"/>
</dbReference>
<dbReference type="Reactome" id="R-SSC-174178">
    <property type="pathway name" value="APC/C:Cdh1 mediated degradation of Cdc20 and other APC/C:Cdh1 targeted proteins in late mitosis/early G1"/>
</dbReference>
<dbReference type="Reactome" id="R-SSC-174184">
    <property type="pathway name" value="Cdc20:Phospho-APC/C mediated degradation of Cyclin A"/>
</dbReference>
<dbReference type="Reactome" id="R-SSC-176407">
    <property type="pathway name" value="Conversion from APC/C:Cdc20 to APC/C:Cdh1 in late anaphase"/>
</dbReference>
<dbReference type="Reactome" id="R-SSC-176408">
    <property type="pathway name" value="Regulation of APC/C activators between G1/S and early anaphase"/>
</dbReference>
<dbReference type="Reactome" id="R-SSC-176409">
    <property type="pathway name" value="APC/C:Cdc20 mediated degradation of mitotic proteins"/>
</dbReference>
<dbReference type="Reactome" id="R-SSC-176417">
    <property type="pathway name" value="Phosphorylation of Emi1"/>
</dbReference>
<dbReference type="Reactome" id="R-SSC-179409">
    <property type="pathway name" value="APC-Cdc20 mediated degradation of Nek2A"/>
</dbReference>
<dbReference type="Reactome" id="R-SSC-2467813">
    <property type="pathway name" value="Separation of Sister Chromatids"/>
</dbReference>
<dbReference type="Reactome" id="R-SSC-2500257">
    <property type="pathway name" value="Resolution of Sister Chromatid Cohesion"/>
</dbReference>
<dbReference type="Reactome" id="R-SSC-5663220">
    <property type="pathway name" value="RHO GTPases Activate Formins"/>
</dbReference>
<dbReference type="Reactome" id="R-SSC-5689880">
    <property type="pathway name" value="Ub-specific processing proteases"/>
</dbReference>
<dbReference type="Reactome" id="R-SSC-68877">
    <property type="pathway name" value="Mitotic Prometaphase"/>
</dbReference>
<dbReference type="Reactome" id="R-SSC-9648025">
    <property type="pathway name" value="EML4 and NUDC in mitotic spindle formation"/>
</dbReference>
<dbReference type="Reactome" id="R-SSC-983168">
    <property type="pathway name" value="Antigen processing: Ubiquitination &amp; Proteasome degradation"/>
</dbReference>
<dbReference type="UniPathway" id="UPA00143"/>
<dbReference type="Proteomes" id="UP000008227">
    <property type="component" value="Chromosome 6"/>
</dbReference>
<dbReference type="Proteomes" id="UP000314985">
    <property type="component" value="Unplaced"/>
</dbReference>
<dbReference type="Proteomes" id="UP000694570">
    <property type="component" value="Unplaced"/>
</dbReference>
<dbReference type="Proteomes" id="UP000694571">
    <property type="component" value="Unplaced"/>
</dbReference>
<dbReference type="Proteomes" id="UP000694720">
    <property type="component" value="Unplaced"/>
</dbReference>
<dbReference type="Proteomes" id="UP000694722">
    <property type="component" value="Unplaced"/>
</dbReference>
<dbReference type="Proteomes" id="UP000694723">
    <property type="component" value="Unplaced"/>
</dbReference>
<dbReference type="Proteomes" id="UP000694724">
    <property type="component" value="Unplaced"/>
</dbReference>
<dbReference type="Proteomes" id="UP000694725">
    <property type="component" value="Unplaced"/>
</dbReference>
<dbReference type="Proteomes" id="UP000694726">
    <property type="component" value="Unplaced"/>
</dbReference>
<dbReference type="Proteomes" id="UP000694727">
    <property type="component" value="Unplaced"/>
</dbReference>
<dbReference type="Proteomes" id="UP000694728">
    <property type="component" value="Unplaced"/>
</dbReference>
<dbReference type="Bgee" id="ENSSSCG00000003949">
    <property type="expression patterns" value="Expressed in forelimb bud and 32 other cell types or tissues"/>
</dbReference>
<dbReference type="ExpressionAtlas" id="Q5H7C0">
    <property type="expression patterns" value="baseline and differential"/>
</dbReference>
<dbReference type="GO" id="GO:0005680">
    <property type="term" value="C:anaphase-promoting complex"/>
    <property type="evidence" value="ECO:0000318"/>
    <property type="project" value="GO_Central"/>
</dbReference>
<dbReference type="GO" id="GO:0005813">
    <property type="term" value="C:centrosome"/>
    <property type="evidence" value="ECO:0007669"/>
    <property type="project" value="UniProtKB-SubCell"/>
</dbReference>
<dbReference type="GO" id="GO:0005737">
    <property type="term" value="C:cytoplasm"/>
    <property type="evidence" value="ECO:0007669"/>
    <property type="project" value="UniProtKB-KW"/>
</dbReference>
<dbReference type="GO" id="GO:0000776">
    <property type="term" value="C:kinetochore"/>
    <property type="evidence" value="ECO:0000250"/>
    <property type="project" value="UniProtKB"/>
</dbReference>
<dbReference type="GO" id="GO:0000922">
    <property type="term" value="C:spindle pole"/>
    <property type="evidence" value="ECO:0007669"/>
    <property type="project" value="UniProtKB-SubCell"/>
</dbReference>
<dbReference type="GO" id="GO:0010997">
    <property type="term" value="F:anaphase-promoting complex binding"/>
    <property type="evidence" value="ECO:0000318"/>
    <property type="project" value="GO_Central"/>
</dbReference>
<dbReference type="GO" id="GO:1990757">
    <property type="term" value="F:ubiquitin ligase activator activity"/>
    <property type="evidence" value="ECO:0000318"/>
    <property type="project" value="GO_Central"/>
</dbReference>
<dbReference type="GO" id="GO:0031145">
    <property type="term" value="P:anaphase-promoting complex-dependent catabolic process"/>
    <property type="evidence" value="ECO:0000315"/>
    <property type="project" value="AgBase"/>
</dbReference>
<dbReference type="GO" id="GO:0051301">
    <property type="term" value="P:cell division"/>
    <property type="evidence" value="ECO:0007669"/>
    <property type="project" value="UniProtKB-KW"/>
</dbReference>
<dbReference type="GO" id="GO:0044784">
    <property type="term" value="P:metaphase/anaphase transition of cell cycle"/>
    <property type="evidence" value="ECO:0000250"/>
    <property type="project" value="UniProtKB"/>
</dbReference>
<dbReference type="GO" id="GO:1990949">
    <property type="term" value="P:metaphase/anaphase transition of meiosis I"/>
    <property type="evidence" value="ECO:0000250"/>
    <property type="project" value="UniProtKB"/>
</dbReference>
<dbReference type="GO" id="GO:1905786">
    <property type="term" value="P:positive regulation of anaphase-promoting complex-dependent catabolic process"/>
    <property type="evidence" value="ECO:0000318"/>
    <property type="project" value="GO_Central"/>
</dbReference>
<dbReference type="GO" id="GO:1904146">
    <property type="term" value="P:positive regulation of meiotic cell cycle process involved in oocyte maturation"/>
    <property type="evidence" value="ECO:0000315"/>
    <property type="project" value="AgBase"/>
</dbReference>
<dbReference type="GO" id="GO:0090129">
    <property type="term" value="P:positive regulation of synapse maturation"/>
    <property type="evidence" value="ECO:0000250"/>
    <property type="project" value="UniProtKB"/>
</dbReference>
<dbReference type="GO" id="GO:0031915">
    <property type="term" value="P:positive regulation of synaptic plasticity"/>
    <property type="evidence" value="ECO:0000250"/>
    <property type="project" value="UniProtKB"/>
</dbReference>
<dbReference type="GO" id="GO:1904668">
    <property type="term" value="P:positive regulation of ubiquitin protein ligase activity"/>
    <property type="evidence" value="ECO:0000250"/>
    <property type="project" value="UniProtKB"/>
</dbReference>
<dbReference type="GO" id="GO:0016567">
    <property type="term" value="P:protein ubiquitination"/>
    <property type="evidence" value="ECO:0007669"/>
    <property type="project" value="UniProtKB-UniPathway"/>
</dbReference>
<dbReference type="CDD" id="cd00200">
    <property type="entry name" value="WD40"/>
    <property type="match status" value="1"/>
</dbReference>
<dbReference type="FunFam" id="2.130.10.10:FF:000224">
    <property type="entry name" value="cell division cycle protein 20 homolog"/>
    <property type="match status" value="1"/>
</dbReference>
<dbReference type="Gene3D" id="2.130.10.10">
    <property type="entry name" value="YVTN repeat-like/Quinoprotein amine dehydrogenase"/>
    <property type="match status" value="1"/>
</dbReference>
<dbReference type="InterPro" id="IPR033010">
    <property type="entry name" value="Cdc20/Fizzy"/>
</dbReference>
<dbReference type="InterPro" id="IPR015943">
    <property type="entry name" value="WD40/YVTN_repeat-like_dom_sf"/>
</dbReference>
<dbReference type="InterPro" id="IPR056150">
    <property type="entry name" value="WD40_CDC20-Fz"/>
</dbReference>
<dbReference type="InterPro" id="IPR036322">
    <property type="entry name" value="WD40_repeat_dom_sf"/>
</dbReference>
<dbReference type="InterPro" id="IPR001680">
    <property type="entry name" value="WD40_rpt"/>
</dbReference>
<dbReference type="PANTHER" id="PTHR19918">
    <property type="entry name" value="CELL DIVISION CYCLE 20 CDC20 FIZZY -RELATED"/>
    <property type="match status" value="1"/>
</dbReference>
<dbReference type="PANTHER" id="PTHR19918:SF3">
    <property type="entry name" value="CELL DIVISION CYCLE PROTEIN 20 HOMOLOG"/>
    <property type="match status" value="1"/>
</dbReference>
<dbReference type="Pfam" id="PF24807">
    <property type="entry name" value="WD40_CDC20-Fz"/>
    <property type="match status" value="1"/>
</dbReference>
<dbReference type="SMART" id="SM00320">
    <property type="entry name" value="WD40"/>
    <property type="match status" value="7"/>
</dbReference>
<dbReference type="SUPFAM" id="SSF50978">
    <property type="entry name" value="WD40 repeat-like"/>
    <property type="match status" value="1"/>
</dbReference>
<dbReference type="PROSITE" id="PS00678">
    <property type="entry name" value="WD_REPEATS_1"/>
    <property type="match status" value="1"/>
</dbReference>
<dbReference type="PROSITE" id="PS50082">
    <property type="entry name" value="WD_REPEATS_2"/>
    <property type="match status" value="3"/>
</dbReference>
<dbReference type="PROSITE" id="PS50294">
    <property type="entry name" value="WD_REPEATS_REGION"/>
    <property type="match status" value="1"/>
</dbReference>
<organism>
    <name type="scientific">Sus scrofa</name>
    <name type="common">Pig</name>
    <dbReference type="NCBI Taxonomy" id="9823"/>
    <lineage>
        <taxon>Eukaryota</taxon>
        <taxon>Metazoa</taxon>
        <taxon>Chordata</taxon>
        <taxon>Craniata</taxon>
        <taxon>Vertebrata</taxon>
        <taxon>Euteleostomi</taxon>
        <taxon>Mammalia</taxon>
        <taxon>Eutheria</taxon>
        <taxon>Laurasiatheria</taxon>
        <taxon>Artiodactyla</taxon>
        <taxon>Suina</taxon>
        <taxon>Suidae</taxon>
        <taxon>Sus</taxon>
    </lineage>
</organism>